<comment type="function">
    <text>Actins are highly conserved proteins that are involved in various types of cell motility and are ubiquitously expressed in all eukaryotic cells.</text>
</comment>
<comment type="function">
    <text>Essential component of cell cytoskeleton; plays an important role in cytoplasmic streaming, cell shape determination, cell division, organelle movement and extension growth.</text>
</comment>
<comment type="catalytic activity">
    <reaction evidence="1">
        <text>ATP + H2O = ADP + phosphate + H(+)</text>
        <dbReference type="Rhea" id="RHEA:13065"/>
        <dbReference type="ChEBI" id="CHEBI:15377"/>
        <dbReference type="ChEBI" id="CHEBI:15378"/>
        <dbReference type="ChEBI" id="CHEBI:30616"/>
        <dbReference type="ChEBI" id="CHEBI:43474"/>
        <dbReference type="ChEBI" id="CHEBI:456216"/>
    </reaction>
</comment>
<comment type="subcellular location">
    <subcellularLocation>
        <location>Cytoplasm</location>
        <location>Cytoskeleton</location>
    </subcellularLocation>
</comment>
<comment type="miscellaneous">
    <text>There are at least eight actin genes in rice.</text>
</comment>
<comment type="similarity">
    <text evidence="2">Belongs to the actin family.</text>
</comment>
<protein>
    <recommendedName>
        <fullName>Actin-1</fullName>
        <ecNumber evidence="1">3.6.4.-</ecNumber>
    </recommendedName>
    <alternativeName>
        <fullName>OsRAC1</fullName>
    </alternativeName>
</protein>
<feature type="chain" id="PRO_0000088970" description="Actin-1">
    <location>
        <begin position="1"/>
        <end position="377"/>
    </location>
</feature>
<accession>Q10DV7</accession>
<accession>P13362</accession>
<accession>Q84JJ5</accession>
<reference key="1">
    <citation type="submission" date="2000-08" db="EMBL/GenBank/DDBJ databases">
        <title>Structural analysis of the regulatory particle AAA-ATPase subunits from the Rice 26S proteasome.</title>
        <authorList>
            <person name="Shibahara T."/>
            <person name="Kawasaki H."/>
            <person name="Hirano H."/>
        </authorList>
    </citation>
    <scope>NUCLEOTIDE SEQUENCE [MRNA]</scope>
    <source>
        <strain>cv. Nipponbare</strain>
    </source>
</reference>
<reference key="2">
    <citation type="journal article" date="2005" name="Genome Res.">
        <title>Sequence, annotation, and analysis of synteny between rice chromosome 3 and diverged grass species.</title>
        <authorList>
            <consortium name="The rice chromosome 3 sequencing consortium"/>
            <person name="Buell C.R."/>
            <person name="Yuan Q."/>
            <person name="Ouyang S."/>
            <person name="Liu J."/>
            <person name="Zhu W."/>
            <person name="Wang A."/>
            <person name="Maiti R."/>
            <person name="Haas B."/>
            <person name="Wortman J."/>
            <person name="Pertea M."/>
            <person name="Jones K.M."/>
            <person name="Kim M."/>
            <person name="Overton L."/>
            <person name="Tsitrin T."/>
            <person name="Fadrosh D."/>
            <person name="Bera J."/>
            <person name="Weaver B."/>
            <person name="Jin S."/>
            <person name="Johri S."/>
            <person name="Reardon M."/>
            <person name="Webb K."/>
            <person name="Hill J."/>
            <person name="Moffat K."/>
            <person name="Tallon L."/>
            <person name="Van Aken S."/>
            <person name="Lewis M."/>
            <person name="Utterback T."/>
            <person name="Feldblyum T."/>
            <person name="Zismann V."/>
            <person name="Iobst S."/>
            <person name="Hsiao J."/>
            <person name="de Vazeille A.R."/>
            <person name="Salzberg S.L."/>
            <person name="White O."/>
            <person name="Fraser C.M."/>
            <person name="Yu Y."/>
            <person name="Kim H."/>
            <person name="Rambo T."/>
            <person name="Currie J."/>
            <person name="Collura K."/>
            <person name="Kernodle-Thompson S."/>
            <person name="Wei F."/>
            <person name="Kudrna K."/>
            <person name="Ammiraju J.S.S."/>
            <person name="Luo M."/>
            <person name="Goicoechea J.L."/>
            <person name="Wing R.A."/>
            <person name="Henry D."/>
            <person name="Oates R."/>
            <person name="Palmer M."/>
            <person name="Pries G."/>
            <person name="Saski C."/>
            <person name="Simmons J."/>
            <person name="Soderlund C."/>
            <person name="Nelson W."/>
            <person name="de la Bastide M."/>
            <person name="Spiegel L."/>
            <person name="Nascimento L."/>
            <person name="Huang E."/>
            <person name="Preston R."/>
            <person name="Zutavern T."/>
            <person name="Palmer L."/>
            <person name="O'Shaughnessy A."/>
            <person name="Dike S."/>
            <person name="McCombie W.R."/>
            <person name="Minx P."/>
            <person name="Cordum H."/>
            <person name="Wilson R."/>
            <person name="Jin W."/>
            <person name="Lee H.R."/>
            <person name="Jiang J."/>
            <person name="Jackson S."/>
        </authorList>
    </citation>
    <scope>NUCLEOTIDE SEQUENCE [LARGE SCALE GENOMIC DNA]</scope>
    <source>
        <strain>cv. Nipponbare</strain>
    </source>
</reference>
<reference key="3">
    <citation type="journal article" date="2005" name="Nature">
        <title>The map-based sequence of the rice genome.</title>
        <authorList>
            <consortium name="International rice genome sequencing project (IRGSP)"/>
        </authorList>
    </citation>
    <scope>NUCLEOTIDE SEQUENCE [LARGE SCALE GENOMIC DNA]</scope>
    <source>
        <strain>cv. Nipponbare</strain>
    </source>
</reference>
<reference key="4">
    <citation type="journal article" date="2008" name="Nucleic Acids Res.">
        <title>The rice annotation project database (RAP-DB): 2008 update.</title>
        <authorList>
            <consortium name="The rice annotation project (RAP)"/>
        </authorList>
    </citation>
    <scope>GENOME REANNOTATION</scope>
    <source>
        <strain>cv. Nipponbare</strain>
    </source>
</reference>
<reference key="5">
    <citation type="journal article" date="2013" name="Rice">
        <title>Improvement of the Oryza sativa Nipponbare reference genome using next generation sequence and optical map data.</title>
        <authorList>
            <person name="Kawahara Y."/>
            <person name="de la Bastide M."/>
            <person name="Hamilton J.P."/>
            <person name="Kanamori H."/>
            <person name="McCombie W.R."/>
            <person name="Ouyang S."/>
            <person name="Schwartz D.C."/>
            <person name="Tanaka T."/>
            <person name="Wu J."/>
            <person name="Zhou S."/>
            <person name="Childs K.L."/>
            <person name="Davidson R.M."/>
            <person name="Lin H."/>
            <person name="Quesada-Ocampo L."/>
            <person name="Vaillancourt B."/>
            <person name="Sakai H."/>
            <person name="Lee S.S."/>
            <person name="Kim J."/>
            <person name="Numa H."/>
            <person name="Itoh T."/>
            <person name="Buell C.R."/>
            <person name="Matsumoto T."/>
        </authorList>
    </citation>
    <scope>GENOME REANNOTATION</scope>
    <source>
        <strain>cv. Nipponbare</strain>
    </source>
</reference>
<reference key="6">
    <citation type="journal article" date="2005" name="PLoS Biol.">
        <title>The genomes of Oryza sativa: a history of duplications.</title>
        <authorList>
            <person name="Yu J."/>
            <person name="Wang J."/>
            <person name="Lin W."/>
            <person name="Li S."/>
            <person name="Li H."/>
            <person name="Zhou J."/>
            <person name="Ni P."/>
            <person name="Dong W."/>
            <person name="Hu S."/>
            <person name="Zeng C."/>
            <person name="Zhang J."/>
            <person name="Zhang Y."/>
            <person name="Li R."/>
            <person name="Xu Z."/>
            <person name="Li S."/>
            <person name="Li X."/>
            <person name="Zheng H."/>
            <person name="Cong L."/>
            <person name="Lin L."/>
            <person name="Yin J."/>
            <person name="Geng J."/>
            <person name="Li G."/>
            <person name="Shi J."/>
            <person name="Liu J."/>
            <person name="Lv H."/>
            <person name="Li J."/>
            <person name="Wang J."/>
            <person name="Deng Y."/>
            <person name="Ran L."/>
            <person name="Shi X."/>
            <person name="Wang X."/>
            <person name="Wu Q."/>
            <person name="Li C."/>
            <person name="Ren X."/>
            <person name="Wang J."/>
            <person name="Wang X."/>
            <person name="Li D."/>
            <person name="Liu D."/>
            <person name="Zhang X."/>
            <person name="Ji Z."/>
            <person name="Zhao W."/>
            <person name="Sun Y."/>
            <person name="Zhang Z."/>
            <person name="Bao J."/>
            <person name="Han Y."/>
            <person name="Dong L."/>
            <person name="Ji J."/>
            <person name="Chen P."/>
            <person name="Wu S."/>
            <person name="Liu J."/>
            <person name="Xiao Y."/>
            <person name="Bu D."/>
            <person name="Tan J."/>
            <person name="Yang L."/>
            <person name="Ye C."/>
            <person name="Zhang J."/>
            <person name="Xu J."/>
            <person name="Zhou Y."/>
            <person name="Yu Y."/>
            <person name="Zhang B."/>
            <person name="Zhuang S."/>
            <person name="Wei H."/>
            <person name="Liu B."/>
            <person name="Lei M."/>
            <person name="Yu H."/>
            <person name="Li Y."/>
            <person name="Xu H."/>
            <person name="Wei S."/>
            <person name="He X."/>
            <person name="Fang L."/>
            <person name="Zhang Z."/>
            <person name="Zhang Y."/>
            <person name="Huang X."/>
            <person name="Su Z."/>
            <person name="Tong W."/>
            <person name="Li J."/>
            <person name="Tong Z."/>
            <person name="Li S."/>
            <person name="Ye J."/>
            <person name="Wang L."/>
            <person name="Fang L."/>
            <person name="Lei T."/>
            <person name="Chen C.-S."/>
            <person name="Chen H.-C."/>
            <person name="Xu Z."/>
            <person name="Li H."/>
            <person name="Huang H."/>
            <person name="Zhang F."/>
            <person name="Xu H."/>
            <person name="Li N."/>
            <person name="Zhao C."/>
            <person name="Li S."/>
            <person name="Dong L."/>
            <person name="Huang Y."/>
            <person name="Li L."/>
            <person name="Xi Y."/>
            <person name="Qi Q."/>
            <person name="Li W."/>
            <person name="Zhang B."/>
            <person name="Hu W."/>
            <person name="Zhang Y."/>
            <person name="Tian X."/>
            <person name="Jiao Y."/>
            <person name="Liang X."/>
            <person name="Jin J."/>
            <person name="Gao L."/>
            <person name="Zheng W."/>
            <person name="Hao B."/>
            <person name="Liu S.-M."/>
            <person name="Wang W."/>
            <person name="Yuan L."/>
            <person name="Cao M."/>
            <person name="McDermott J."/>
            <person name="Samudrala R."/>
            <person name="Wang J."/>
            <person name="Wong G.K.-S."/>
            <person name="Yang H."/>
        </authorList>
    </citation>
    <scope>NUCLEOTIDE SEQUENCE [LARGE SCALE GENOMIC DNA]</scope>
    <source>
        <strain>cv. Nipponbare</strain>
    </source>
</reference>
<gene>
    <name type="primary">ACT1</name>
    <name type="synonym">AC1</name>
    <name type="synonym">RAC1</name>
    <name type="ordered locus">Os03g0718100</name>
    <name type="ordered locus">LOC_Os03g50885</name>
    <name type="ORF">OsJ_011865</name>
    <name type="ORF">OSJNBa0078A17.12</name>
</gene>
<sequence length="377" mass="41813">MADAEDIQPLVCDNGTGMVKAGFAGDDAPRAVFPSIVGRPRHTGVMVGMGQKDAYVGDEAQSKRGILTLKYPIEHGIVSNWDDMEKIWHHTFYNELRVAPEEHPVLLTEAPLNPKANREKMTQIMFETFNTPAMYVAIQAVLSLYASGRTTGIVLDSGDGVSHTVPIYEGYALPHAILRLDLAGRDLTDYLMKILTERGYSFTTTAEREIVRDMKEKLSYIALDYDQEMETAKTSSSVEKSYELPDGQVITIGAERFRCPEVLFQPSFIGMEAAGIHETTYNSIMKCDVDIRKDLYGNIVLSGGTTMFPGIADRMSKEITALAPSSMKIKVVAPPERKYSVWIGGSILASLSTFQQMWIAKAEYDESGPSIVHRKCF</sequence>
<dbReference type="EC" id="3.6.4.-" evidence="1"/>
<dbReference type="EMBL" id="AB047313">
    <property type="protein sequence ID" value="BAC76319.1"/>
    <property type="molecule type" value="mRNA"/>
</dbReference>
<dbReference type="EMBL" id="AC091532">
    <property type="status" value="NOT_ANNOTATED_CDS"/>
    <property type="molecule type" value="Genomic_DNA"/>
</dbReference>
<dbReference type="EMBL" id="DP000009">
    <property type="protein sequence ID" value="ABF98567.1"/>
    <property type="molecule type" value="Genomic_DNA"/>
</dbReference>
<dbReference type="EMBL" id="AP008209">
    <property type="protein sequence ID" value="BAF13000.1"/>
    <property type="molecule type" value="Genomic_DNA"/>
</dbReference>
<dbReference type="EMBL" id="AP014959">
    <property type="protein sequence ID" value="BAS86094.1"/>
    <property type="molecule type" value="Genomic_DNA"/>
</dbReference>
<dbReference type="EMBL" id="CM000140">
    <property type="protein sequence ID" value="EAZ28382.1"/>
    <property type="molecule type" value="Genomic_DNA"/>
</dbReference>
<dbReference type="RefSeq" id="XP_015630316.1">
    <property type="nucleotide sequence ID" value="XM_015774830.1"/>
</dbReference>
<dbReference type="SMR" id="Q10DV7"/>
<dbReference type="FunCoup" id="Q10DV7">
    <property type="interactions" value="2516"/>
</dbReference>
<dbReference type="STRING" id="39947.Q10DV7"/>
<dbReference type="CarbonylDB" id="Q10DV7"/>
<dbReference type="PaxDb" id="39947-Q10DV7"/>
<dbReference type="EnsemblPlants" id="Os03t0718100-01">
    <property type="protein sequence ID" value="Os03t0718100-01"/>
    <property type="gene ID" value="Os03g0718100"/>
</dbReference>
<dbReference type="Gramene" id="Os03t0718100-01">
    <property type="protein sequence ID" value="Os03t0718100-01"/>
    <property type="gene ID" value="Os03g0718100"/>
</dbReference>
<dbReference type="KEGG" id="dosa:Os03g0718100"/>
<dbReference type="eggNOG" id="KOG0676">
    <property type="taxonomic scope" value="Eukaryota"/>
</dbReference>
<dbReference type="HOGENOM" id="CLU_027965_0_2_1"/>
<dbReference type="InParanoid" id="Q10DV7"/>
<dbReference type="OMA" id="FTTSAEF"/>
<dbReference type="OrthoDB" id="503831at2759"/>
<dbReference type="Proteomes" id="UP000000763">
    <property type="component" value="Chromosome 3"/>
</dbReference>
<dbReference type="Proteomes" id="UP000007752">
    <property type="component" value="Chromosome 3"/>
</dbReference>
<dbReference type="Proteomes" id="UP000059680">
    <property type="component" value="Chromosome 3"/>
</dbReference>
<dbReference type="ExpressionAtlas" id="Q10DV7">
    <property type="expression patterns" value="baseline and differential"/>
</dbReference>
<dbReference type="GO" id="GO:0015629">
    <property type="term" value="C:actin cytoskeleton"/>
    <property type="evidence" value="ECO:0000318"/>
    <property type="project" value="GO_Central"/>
</dbReference>
<dbReference type="GO" id="GO:0005737">
    <property type="term" value="C:cytoplasm"/>
    <property type="evidence" value="ECO:0007669"/>
    <property type="project" value="UniProtKB-KW"/>
</dbReference>
<dbReference type="GO" id="GO:0005524">
    <property type="term" value="F:ATP binding"/>
    <property type="evidence" value="ECO:0007669"/>
    <property type="project" value="UniProtKB-KW"/>
</dbReference>
<dbReference type="GO" id="GO:0016787">
    <property type="term" value="F:hydrolase activity"/>
    <property type="evidence" value="ECO:0007669"/>
    <property type="project" value="UniProtKB-KW"/>
</dbReference>
<dbReference type="CDD" id="cd10224">
    <property type="entry name" value="ASKHA_NBD_actin"/>
    <property type="match status" value="1"/>
</dbReference>
<dbReference type="FunFam" id="2.30.36.70:FF:000001">
    <property type="entry name" value="Actin, alpha skeletal muscle"/>
    <property type="match status" value="1"/>
</dbReference>
<dbReference type="FunFam" id="3.30.420.40:FF:000291">
    <property type="entry name" value="Actin, alpha skeletal muscle"/>
    <property type="match status" value="1"/>
</dbReference>
<dbReference type="FunFam" id="3.90.640.10:FF:000001">
    <property type="entry name" value="Actin, muscle"/>
    <property type="match status" value="1"/>
</dbReference>
<dbReference type="FunFam" id="3.30.420.40:FF:000404">
    <property type="entry name" value="Major actin"/>
    <property type="match status" value="1"/>
</dbReference>
<dbReference type="FunFam" id="3.30.420.40:FF:000058">
    <property type="entry name" value="Putative actin-related protein 5"/>
    <property type="match status" value="1"/>
</dbReference>
<dbReference type="Gene3D" id="3.30.420.40">
    <property type="match status" value="2"/>
</dbReference>
<dbReference type="Gene3D" id="3.90.640.10">
    <property type="entry name" value="Actin, Chain A, domain 4"/>
    <property type="match status" value="1"/>
</dbReference>
<dbReference type="InterPro" id="IPR004000">
    <property type="entry name" value="Actin"/>
</dbReference>
<dbReference type="InterPro" id="IPR020902">
    <property type="entry name" value="Actin/actin-like_CS"/>
</dbReference>
<dbReference type="InterPro" id="IPR004001">
    <property type="entry name" value="Actin_CS"/>
</dbReference>
<dbReference type="InterPro" id="IPR043129">
    <property type="entry name" value="ATPase_NBD"/>
</dbReference>
<dbReference type="PANTHER" id="PTHR11937">
    <property type="entry name" value="ACTIN"/>
    <property type="match status" value="1"/>
</dbReference>
<dbReference type="Pfam" id="PF00022">
    <property type="entry name" value="Actin"/>
    <property type="match status" value="1"/>
</dbReference>
<dbReference type="PRINTS" id="PR00190">
    <property type="entry name" value="ACTIN"/>
</dbReference>
<dbReference type="SMART" id="SM00268">
    <property type="entry name" value="ACTIN"/>
    <property type="match status" value="1"/>
</dbReference>
<dbReference type="SUPFAM" id="SSF53067">
    <property type="entry name" value="Actin-like ATPase domain"/>
    <property type="match status" value="2"/>
</dbReference>
<dbReference type="PROSITE" id="PS00406">
    <property type="entry name" value="ACTINS_1"/>
    <property type="match status" value="1"/>
</dbReference>
<dbReference type="PROSITE" id="PS00432">
    <property type="entry name" value="ACTINS_2"/>
    <property type="match status" value="1"/>
</dbReference>
<dbReference type="PROSITE" id="PS01132">
    <property type="entry name" value="ACTINS_ACT_LIKE"/>
    <property type="match status" value="1"/>
</dbReference>
<organism>
    <name type="scientific">Oryza sativa subsp. japonica</name>
    <name type="common">Rice</name>
    <dbReference type="NCBI Taxonomy" id="39947"/>
    <lineage>
        <taxon>Eukaryota</taxon>
        <taxon>Viridiplantae</taxon>
        <taxon>Streptophyta</taxon>
        <taxon>Embryophyta</taxon>
        <taxon>Tracheophyta</taxon>
        <taxon>Spermatophyta</taxon>
        <taxon>Magnoliopsida</taxon>
        <taxon>Liliopsida</taxon>
        <taxon>Poales</taxon>
        <taxon>Poaceae</taxon>
        <taxon>BOP clade</taxon>
        <taxon>Oryzoideae</taxon>
        <taxon>Oryzeae</taxon>
        <taxon>Oryzinae</taxon>
        <taxon>Oryza</taxon>
        <taxon>Oryza sativa</taxon>
    </lineage>
</organism>
<name>ACT1_ORYSJ</name>
<evidence type="ECO:0000250" key="1">
    <source>
        <dbReference type="UniProtKB" id="P68137"/>
    </source>
</evidence>
<evidence type="ECO:0000305" key="2"/>
<proteinExistence type="evidence at transcript level"/>
<keyword id="KW-0067">ATP-binding</keyword>
<keyword id="KW-0963">Cytoplasm</keyword>
<keyword id="KW-0206">Cytoskeleton</keyword>
<keyword id="KW-0378">Hydrolase</keyword>
<keyword id="KW-0547">Nucleotide-binding</keyword>
<keyword id="KW-1185">Reference proteome</keyword>